<dbReference type="EC" id="3.-.-.-"/>
<dbReference type="EMBL" id="BC109445">
    <property type="protein sequence ID" value="AAI09446.1"/>
    <property type="molecule type" value="mRNA"/>
</dbReference>
<dbReference type="RefSeq" id="NP_001032774.1">
    <property type="nucleotide sequence ID" value="NM_001037685.2"/>
</dbReference>
<dbReference type="SMR" id="Q32LS6"/>
<dbReference type="FunCoup" id="Q32LS6">
    <property type="interactions" value="1556"/>
</dbReference>
<dbReference type="STRING" id="7955.ENSDARP00000076697"/>
<dbReference type="ESTHER" id="danre-q32ls6">
    <property type="family name" value="ABHD13-BEM46"/>
</dbReference>
<dbReference type="GlyCosmos" id="Q32LS6">
    <property type="glycosylation" value="1 site, No reported glycans"/>
</dbReference>
<dbReference type="PaxDb" id="7955-ENSDARP00000076697"/>
<dbReference type="Ensembl" id="ENSDART00000082260">
    <property type="protein sequence ID" value="ENSDARP00000076697"/>
    <property type="gene ID" value="ENSDARG00000059209"/>
</dbReference>
<dbReference type="GeneID" id="561333"/>
<dbReference type="KEGG" id="dre:561333"/>
<dbReference type="AGR" id="ZFIN:ZDB-GENE-051120-54"/>
<dbReference type="CTD" id="84945"/>
<dbReference type="ZFIN" id="ZDB-GENE-051120-54">
    <property type="gene designation" value="abhd13"/>
</dbReference>
<dbReference type="eggNOG" id="KOG4391">
    <property type="taxonomic scope" value="Eukaryota"/>
</dbReference>
<dbReference type="HOGENOM" id="CLU_029375_2_0_1"/>
<dbReference type="InParanoid" id="Q32LS6"/>
<dbReference type="OMA" id="QYWTSED"/>
<dbReference type="OrthoDB" id="10249433at2759"/>
<dbReference type="PhylomeDB" id="Q32LS6"/>
<dbReference type="TreeFam" id="TF315122"/>
<dbReference type="PRO" id="PR:Q32LS6"/>
<dbReference type="Proteomes" id="UP000000437">
    <property type="component" value="Chromosome 9"/>
</dbReference>
<dbReference type="Bgee" id="ENSDARG00000059209">
    <property type="expression patterns" value="Expressed in mature ovarian follicle and 19 other cell types or tissues"/>
</dbReference>
<dbReference type="GO" id="GO:0016020">
    <property type="term" value="C:membrane"/>
    <property type="evidence" value="ECO:0000318"/>
    <property type="project" value="GO_Central"/>
</dbReference>
<dbReference type="GO" id="GO:0008474">
    <property type="term" value="F:palmitoyl-(protein) hydrolase activity"/>
    <property type="evidence" value="ECO:0000318"/>
    <property type="project" value="GO_Central"/>
</dbReference>
<dbReference type="Gene3D" id="3.40.50.1820">
    <property type="entry name" value="alpha/beta hydrolase"/>
    <property type="match status" value="1"/>
</dbReference>
<dbReference type="InterPro" id="IPR000073">
    <property type="entry name" value="AB_hydrolase_1"/>
</dbReference>
<dbReference type="InterPro" id="IPR029058">
    <property type="entry name" value="AB_hydrolase_fold"/>
</dbReference>
<dbReference type="PANTHER" id="PTHR12277">
    <property type="entry name" value="ALPHA/BETA HYDROLASE DOMAIN-CONTAINING PROTEIN"/>
    <property type="match status" value="1"/>
</dbReference>
<dbReference type="PANTHER" id="PTHR12277:SF81">
    <property type="entry name" value="PROTEIN ABHD13"/>
    <property type="match status" value="1"/>
</dbReference>
<dbReference type="Pfam" id="PF00561">
    <property type="entry name" value="Abhydrolase_1"/>
    <property type="match status" value="1"/>
</dbReference>
<dbReference type="PRINTS" id="PR00111">
    <property type="entry name" value="ABHYDROLASE"/>
</dbReference>
<dbReference type="SUPFAM" id="SSF53474">
    <property type="entry name" value="alpha/beta-Hydrolases"/>
    <property type="match status" value="1"/>
</dbReference>
<name>ABHDD_DANRE</name>
<feature type="chain" id="PRO_0000281079" description="Protein ABHD13">
    <location>
        <begin position="1"/>
        <end position="337"/>
    </location>
</feature>
<feature type="transmembrane region" description="Helical; Signal-anchor for type II membrane protein" evidence="3">
    <location>
        <begin position="30"/>
        <end position="50"/>
    </location>
</feature>
<feature type="active site" description="Charge relay system" evidence="1">
    <location>
        <position position="193"/>
    </location>
</feature>
<feature type="active site" description="Charge relay system" evidence="1">
    <location>
        <position position="268"/>
    </location>
</feature>
<feature type="active site" description="Charge relay system" evidence="1">
    <location>
        <position position="298"/>
    </location>
</feature>
<feature type="glycosylation site" description="N-linked (GlcNAc...) asparagine" evidence="3">
    <location>
        <position position="299"/>
    </location>
</feature>
<organism>
    <name type="scientific">Danio rerio</name>
    <name type="common">Zebrafish</name>
    <name type="synonym">Brachydanio rerio</name>
    <dbReference type="NCBI Taxonomy" id="7955"/>
    <lineage>
        <taxon>Eukaryota</taxon>
        <taxon>Metazoa</taxon>
        <taxon>Chordata</taxon>
        <taxon>Craniata</taxon>
        <taxon>Vertebrata</taxon>
        <taxon>Euteleostomi</taxon>
        <taxon>Actinopterygii</taxon>
        <taxon>Neopterygii</taxon>
        <taxon>Teleostei</taxon>
        <taxon>Ostariophysi</taxon>
        <taxon>Cypriniformes</taxon>
        <taxon>Danionidae</taxon>
        <taxon>Danioninae</taxon>
        <taxon>Danio</taxon>
    </lineage>
</organism>
<accession>Q32LS6</accession>
<proteinExistence type="evidence at transcript level"/>
<sequence length="337" mass="37901">MEKPWRLWGPLEACLLSVCAWSWGFCRVSLLALILTFHLYGGFVLLGLILASLAGILYKFQDVLLYFPDQPSSSRLYVPMPTGIPHENVYIRTKDGIRLNLILLRYTGENPAGAPTILYFHGNAGNIGHRVPNALLMLVNLKANVVLVDYRGYGKSEGDPSEDGLYQDAEATLDYVMTRPDIDKTKVVLFGRSLGGAVAIRLASCNPHRVAAIMVENTFLSIPHMAATLFSFFPMRYLPLWCYKNKFLSYRHVVPCRMPSLFISGLSDQLIPPVMMKQLYELSPSRTKRLAIFPEGTHNDTWQCQGYFSALEQFMKELLKSHAREETTQGTASVTII</sequence>
<evidence type="ECO:0000250" key="1"/>
<evidence type="ECO:0000250" key="2">
    <source>
        <dbReference type="UniProtKB" id="Q7L211"/>
    </source>
</evidence>
<evidence type="ECO:0000255" key="3"/>
<evidence type="ECO:0000305" key="4"/>
<comment type="subcellular location">
    <subcellularLocation>
        <location evidence="4">Membrane</location>
        <topology evidence="4">Single-pass type II membrane protein</topology>
    </subcellularLocation>
</comment>
<comment type="similarity">
    <text evidence="4">Belongs to the serine esterase family.</text>
</comment>
<protein>
    <recommendedName>
        <fullName evidence="4">Protein ABHD13</fullName>
        <ecNumber>3.-.-.-</ecNumber>
    </recommendedName>
    <alternativeName>
        <fullName evidence="4">Alpha/beta hydrolase domain-containing protein 13</fullName>
        <shortName evidence="2">Abhydrolase domain-containing protein 13</shortName>
    </alternativeName>
</protein>
<reference key="1">
    <citation type="submission" date="2005-11" db="EMBL/GenBank/DDBJ databases">
        <authorList>
            <consortium name="NIH - Zebrafish Gene Collection (ZGC) project"/>
        </authorList>
    </citation>
    <scope>NUCLEOTIDE SEQUENCE [LARGE SCALE MRNA]</scope>
    <source>
        <strain>AB</strain>
        <tissue>Intestine</tissue>
    </source>
</reference>
<keyword id="KW-0325">Glycoprotein</keyword>
<keyword id="KW-0378">Hydrolase</keyword>
<keyword id="KW-0472">Membrane</keyword>
<keyword id="KW-1185">Reference proteome</keyword>
<keyword id="KW-0735">Signal-anchor</keyword>
<keyword id="KW-0812">Transmembrane</keyword>
<keyword id="KW-1133">Transmembrane helix</keyword>
<gene>
    <name evidence="2" type="primary">abhd13</name>
    <name type="ORF">zgc:123286</name>
</gene>